<feature type="chain" id="PRO_0000400465" description="L-cysteine:1D-myo-inositol 2-amino-2-deoxy-alpha-D-glucopyranoside ligase">
    <location>
        <begin position="1"/>
        <end position="415"/>
    </location>
</feature>
<feature type="short sequence motif" description="'HIGH' region" evidence="1">
    <location>
        <begin position="45"/>
        <end position="55"/>
    </location>
</feature>
<feature type="short sequence motif" description="'ERGGDP' region" evidence="1">
    <location>
        <begin position="187"/>
        <end position="192"/>
    </location>
</feature>
<feature type="short sequence motif" description="'KMSKS' region" evidence="1">
    <location>
        <begin position="289"/>
        <end position="293"/>
    </location>
</feature>
<feature type="binding site" evidence="1">
    <location>
        <begin position="43"/>
        <end position="46"/>
    </location>
    <ligand>
        <name>L-cysteinyl-5'-AMP</name>
        <dbReference type="ChEBI" id="CHEBI:144924"/>
    </ligand>
</feature>
<feature type="binding site" evidence="1">
    <location>
        <position position="43"/>
    </location>
    <ligand>
        <name>Zn(2+)</name>
        <dbReference type="ChEBI" id="CHEBI:29105"/>
    </ligand>
</feature>
<feature type="binding site" evidence="1">
    <location>
        <position position="58"/>
    </location>
    <ligand>
        <name>L-cysteinyl-5'-AMP</name>
        <dbReference type="ChEBI" id="CHEBI:144924"/>
    </ligand>
</feature>
<feature type="binding site" evidence="1">
    <location>
        <begin position="81"/>
        <end position="83"/>
    </location>
    <ligand>
        <name>L-cysteinyl-5'-AMP</name>
        <dbReference type="ChEBI" id="CHEBI:144924"/>
    </ligand>
</feature>
<feature type="binding site" evidence="1">
    <location>
        <position position="227"/>
    </location>
    <ligand>
        <name>L-cysteinyl-5'-AMP</name>
        <dbReference type="ChEBI" id="CHEBI:144924"/>
    </ligand>
</feature>
<feature type="binding site" evidence="1">
    <location>
        <position position="231"/>
    </location>
    <ligand>
        <name>Zn(2+)</name>
        <dbReference type="ChEBI" id="CHEBI:29105"/>
    </ligand>
</feature>
<feature type="binding site" evidence="1">
    <location>
        <begin position="249"/>
        <end position="251"/>
    </location>
    <ligand>
        <name>L-cysteinyl-5'-AMP</name>
        <dbReference type="ChEBI" id="CHEBI:144924"/>
    </ligand>
</feature>
<feature type="binding site" evidence="1">
    <location>
        <position position="256"/>
    </location>
    <ligand>
        <name>Zn(2+)</name>
        <dbReference type="ChEBI" id="CHEBI:29105"/>
    </ligand>
</feature>
<feature type="binding site" evidence="1">
    <location>
        <position position="283"/>
    </location>
    <ligand>
        <name>L-cysteinyl-5'-AMP</name>
        <dbReference type="ChEBI" id="CHEBI:144924"/>
    </ligand>
</feature>
<sequence length="415" mass="45517">MESWSAPEVPALPGRGPQLRLYDSADRQVRPVSAGDTATMYVCGITPYDATHLGHAATYLAFDLVHRLWLDAGHRVHYVQNITDVDDPLFERAARDGIDWRDLGAREIQLFREDMAALRVLPPHDYVAATDAIAEVIELVEKMLASGAAYVVDDPEFPDVYYRADATVQFGYESNYDHETMLTLFAERGGDPDRAGKADELDALLWRAERPGEPSWPSPFGPGRPGWHVECAAIALSRIGTGLDIQGGGSDLIFPHHEFSAAHAESVTGERRFARHYVHAGMIGWDGHKMSKSRGNLVLVSRLRAEGVDPSAIRLGLLAGHYREDRFWSDDVLSDAQTRLQRWRRATSLPTGPDATDVLARVRTYLADDLDTPKALIALDAWCTEALDGGGSDVTAPKTVATAVDALLGVALPVE</sequence>
<reference key="1">
    <citation type="submission" date="2006-06" db="EMBL/GenBank/DDBJ databases">
        <title>Complete sequence of chromosome of Mycobacterium sp. MCS.</title>
        <authorList>
            <consortium name="US DOE Joint Genome Institute"/>
            <person name="Copeland A."/>
            <person name="Lucas S."/>
            <person name="Lapidus A."/>
            <person name="Barry K."/>
            <person name="Detter J.C."/>
            <person name="Glavina del Rio T."/>
            <person name="Hammon N."/>
            <person name="Israni S."/>
            <person name="Dalin E."/>
            <person name="Tice H."/>
            <person name="Pitluck S."/>
            <person name="Martinez M."/>
            <person name="Schmutz J."/>
            <person name="Larimer F."/>
            <person name="Land M."/>
            <person name="Hauser L."/>
            <person name="Kyrpides N."/>
            <person name="Kim E."/>
            <person name="Miller C.D."/>
            <person name="Hughes J.E."/>
            <person name="Anderson A.J."/>
            <person name="Sims R.C."/>
            <person name="Richardson P."/>
        </authorList>
    </citation>
    <scope>NUCLEOTIDE SEQUENCE [LARGE SCALE GENOMIC DNA]</scope>
    <source>
        <strain>MCS</strain>
    </source>
</reference>
<protein>
    <recommendedName>
        <fullName evidence="1">L-cysteine:1D-myo-inositol 2-amino-2-deoxy-alpha-D-glucopyranoside ligase</fullName>
        <shortName evidence="1">L-Cys:GlcN-Ins ligase</shortName>
        <ecNumber evidence="1">6.3.1.13</ecNumber>
    </recommendedName>
    <alternativeName>
        <fullName evidence="1">Mycothiol ligase</fullName>
        <shortName evidence="1">MSH ligase</shortName>
    </alternativeName>
</protein>
<name>MSHC_MYCSS</name>
<dbReference type="EC" id="6.3.1.13" evidence="1"/>
<dbReference type="EMBL" id="CP000384">
    <property type="protein sequence ID" value="ABG09260.1"/>
    <property type="molecule type" value="Genomic_DNA"/>
</dbReference>
<dbReference type="SMR" id="Q1B774"/>
<dbReference type="KEGG" id="mmc:Mmcs_3153"/>
<dbReference type="HOGENOM" id="CLU_013528_0_0_11"/>
<dbReference type="BioCyc" id="MSP164756:G1G6O-3218-MONOMER"/>
<dbReference type="GO" id="GO:0005829">
    <property type="term" value="C:cytosol"/>
    <property type="evidence" value="ECO:0007669"/>
    <property type="project" value="TreeGrafter"/>
</dbReference>
<dbReference type="GO" id="GO:0005524">
    <property type="term" value="F:ATP binding"/>
    <property type="evidence" value="ECO:0007669"/>
    <property type="project" value="UniProtKB-KW"/>
</dbReference>
<dbReference type="GO" id="GO:0035446">
    <property type="term" value="F:cysteine-glucosaminylinositol ligase activity"/>
    <property type="evidence" value="ECO:0007669"/>
    <property type="project" value="UniProtKB-UniRule"/>
</dbReference>
<dbReference type="GO" id="GO:0004817">
    <property type="term" value="F:cysteine-tRNA ligase activity"/>
    <property type="evidence" value="ECO:0007669"/>
    <property type="project" value="TreeGrafter"/>
</dbReference>
<dbReference type="GO" id="GO:0008270">
    <property type="term" value="F:zinc ion binding"/>
    <property type="evidence" value="ECO:0007669"/>
    <property type="project" value="UniProtKB-UniRule"/>
</dbReference>
<dbReference type="GO" id="GO:0006423">
    <property type="term" value="P:cysteinyl-tRNA aminoacylation"/>
    <property type="evidence" value="ECO:0007669"/>
    <property type="project" value="TreeGrafter"/>
</dbReference>
<dbReference type="GO" id="GO:0010125">
    <property type="term" value="P:mycothiol biosynthetic process"/>
    <property type="evidence" value="ECO:0007669"/>
    <property type="project" value="UniProtKB-UniRule"/>
</dbReference>
<dbReference type="CDD" id="cd07955">
    <property type="entry name" value="Anticodon_Ia_Cys_like"/>
    <property type="match status" value="1"/>
</dbReference>
<dbReference type="CDD" id="cd00672">
    <property type="entry name" value="CysRS_core"/>
    <property type="match status" value="1"/>
</dbReference>
<dbReference type="FunFam" id="3.40.50.620:FF:000134">
    <property type="entry name" value="L-cysteine:1D-myo-inositol 2-amino-2-deoxy-alpha-D-glucopyranoside ligase"/>
    <property type="match status" value="1"/>
</dbReference>
<dbReference type="Gene3D" id="1.20.120.640">
    <property type="entry name" value="Anticodon-binding domain of a subclass of class I aminoacyl-tRNA synthetases"/>
    <property type="match status" value="1"/>
</dbReference>
<dbReference type="Gene3D" id="3.40.50.620">
    <property type="entry name" value="HUPs"/>
    <property type="match status" value="1"/>
</dbReference>
<dbReference type="HAMAP" id="MF_01697">
    <property type="entry name" value="MshC"/>
    <property type="match status" value="1"/>
</dbReference>
<dbReference type="InterPro" id="IPR024909">
    <property type="entry name" value="Cys-tRNA/MSH_ligase"/>
</dbReference>
<dbReference type="InterPro" id="IPR017812">
    <property type="entry name" value="Mycothiol_ligase_MshC"/>
</dbReference>
<dbReference type="InterPro" id="IPR014729">
    <property type="entry name" value="Rossmann-like_a/b/a_fold"/>
</dbReference>
<dbReference type="InterPro" id="IPR032678">
    <property type="entry name" value="tRNA-synt_1_cat_dom"/>
</dbReference>
<dbReference type="NCBIfam" id="TIGR03447">
    <property type="entry name" value="mycothiol_MshC"/>
    <property type="match status" value="1"/>
</dbReference>
<dbReference type="PANTHER" id="PTHR10890:SF3">
    <property type="entry name" value="CYSTEINE--TRNA LIGASE, CYTOPLASMIC"/>
    <property type="match status" value="1"/>
</dbReference>
<dbReference type="PANTHER" id="PTHR10890">
    <property type="entry name" value="CYSTEINYL-TRNA SYNTHETASE"/>
    <property type="match status" value="1"/>
</dbReference>
<dbReference type="Pfam" id="PF01406">
    <property type="entry name" value="tRNA-synt_1e"/>
    <property type="match status" value="1"/>
</dbReference>
<dbReference type="PRINTS" id="PR00983">
    <property type="entry name" value="TRNASYNTHCYS"/>
</dbReference>
<dbReference type="SUPFAM" id="SSF52374">
    <property type="entry name" value="Nucleotidylyl transferase"/>
    <property type="match status" value="1"/>
</dbReference>
<comment type="function">
    <text evidence="1">Catalyzes the ATP-dependent condensation of GlcN-Ins and L-cysteine to form L-Cys-GlcN-Ins.</text>
</comment>
<comment type="catalytic activity">
    <reaction evidence="1">
        <text>1D-myo-inositol 2-amino-2-deoxy-alpha-D-glucopyranoside + L-cysteine + ATP = 1D-myo-inositol 2-(L-cysteinylamino)-2-deoxy-alpha-D-glucopyranoside + AMP + diphosphate + H(+)</text>
        <dbReference type="Rhea" id="RHEA:26176"/>
        <dbReference type="ChEBI" id="CHEBI:15378"/>
        <dbReference type="ChEBI" id="CHEBI:30616"/>
        <dbReference type="ChEBI" id="CHEBI:33019"/>
        <dbReference type="ChEBI" id="CHEBI:35235"/>
        <dbReference type="ChEBI" id="CHEBI:58886"/>
        <dbReference type="ChEBI" id="CHEBI:58887"/>
        <dbReference type="ChEBI" id="CHEBI:456215"/>
        <dbReference type="EC" id="6.3.1.13"/>
    </reaction>
</comment>
<comment type="cofactor">
    <cofactor evidence="1">
        <name>Zn(2+)</name>
        <dbReference type="ChEBI" id="CHEBI:29105"/>
    </cofactor>
    <text evidence="1">Binds 1 zinc ion per subunit.</text>
</comment>
<comment type="subunit">
    <text evidence="1">Monomer.</text>
</comment>
<comment type="similarity">
    <text evidence="1">Belongs to the class-I aminoacyl-tRNA synthetase family. MshC subfamily.</text>
</comment>
<organism>
    <name type="scientific">Mycobacterium sp. (strain MCS)</name>
    <dbReference type="NCBI Taxonomy" id="164756"/>
    <lineage>
        <taxon>Bacteria</taxon>
        <taxon>Bacillati</taxon>
        <taxon>Actinomycetota</taxon>
        <taxon>Actinomycetes</taxon>
        <taxon>Mycobacteriales</taxon>
        <taxon>Mycobacteriaceae</taxon>
        <taxon>Mycobacterium</taxon>
    </lineage>
</organism>
<keyword id="KW-0067">ATP-binding</keyword>
<keyword id="KW-0436">Ligase</keyword>
<keyword id="KW-0479">Metal-binding</keyword>
<keyword id="KW-0547">Nucleotide-binding</keyword>
<keyword id="KW-0862">Zinc</keyword>
<proteinExistence type="inferred from homology"/>
<gene>
    <name evidence="1" type="primary">mshC</name>
    <name type="ordered locus">Mmcs_3153</name>
</gene>
<accession>Q1B774</accession>
<evidence type="ECO:0000255" key="1">
    <source>
        <dbReference type="HAMAP-Rule" id="MF_01697"/>
    </source>
</evidence>